<name>RL36_PHYAS</name>
<proteinExistence type="inferred from homology"/>
<comment type="similarity">
    <text evidence="1">Belongs to the bacterial ribosomal protein bL36 family.</text>
</comment>
<feature type="chain" id="PRO_1000196201" description="Large ribosomal subunit protein bL36">
    <location>
        <begin position="1"/>
        <end position="38"/>
    </location>
</feature>
<accession>B1VAC4</accession>
<evidence type="ECO:0000255" key="1">
    <source>
        <dbReference type="HAMAP-Rule" id="MF_00251"/>
    </source>
</evidence>
<evidence type="ECO:0000305" key="2"/>
<sequence>MKVKASVKKRSEDDIIVRRKGRVYVINKKNRRHNQRQG</sequence>
<organism>
    <name type="scientific">Phytoplasma australiense</name>
    <dbReference type="NCBI Taxonomy" id="59748"/>
    <lineage>
        <taxon>Bacteria</taxon>
        <taxon>Bacillati</taxon>
        <taxon>Mycoplasmatota</taxon>
        <taxon>Mollicutes</taxon>
        <taxon>Acholeplasmatales</taxon>
        <taxon>Acholeplasmataceae</taxon>
        <taxon>Candidatus Phytoplasma</taxon>
        <taxon>16SrXII (Stolbur group)</taxon>
    </lineage>
</organism>
<reference key="1">
    <citation type="journal article" date="2008" name="J. Bacteriol.">
        <title>Comparative genome analysis of 'Candidatus Phytoplasma australiense' (subgroup tuf-Australia I; rp-A) and 'Ca. Phytoplasma asteris' strains OY-M and AY-WB.</title>
        <authorList>
            <person name="Tran-Nguyen L.T."/>
            <person name="Kube M."/>
            <person name="Schneider B."/>
            <person name="Reinhardt R."/>
            <person name="Gibb K.S."/>
        </authorList>
    </citation>
    <scope>NUCLEOTIDE SEQUENCE [LARGE SCALE GENOMIC DNA]</scope>
</reference>
<dbReference type="EMBL" id="AM422018">
    <property type="protein sequence ID" value="CAM11897.1"/>
    <property type="molecule type" value="Genomic_DNA"/>
</dbReference>
<dbReference type="SMR" id="B1VAC4"/>
<dbReference type="STRING" id="59748.PA0563"/>
<dbReference type="KEGG" id="pal:PA0563"/>
<dbReference type="eggNOG" id="COG0257">
    <property type="taxonomic scope" value="Bacteria"/>
</dbReference>
<dbReference type="Proteomes" id="UP000008323">
    <property type="component" value="Chromosome"/>
</dbReference>
<dbReference type="GO" id="GO:1990904">
    <property type="term" value="C:ribonucleoprotein complex"/>
    <property type="evidence" value="ECO:0007669"/>
    <property type="project" value="UniProtKB-KW"/>
</dbReference>
<dbReference type="GO" id="GO:0005840">
    <property type="term" value="C:ribosome"/>
    <property type="evidence" value="ECO:0007669"/>
    <property type="project" value="UniProtKB-KW"/>
</dbReference>
<dbReference type="GO" id="GO:0003735">
    <property type="term" value="F:structural constituent of ribosome"/>
    <property type="evidence" value="ECO:0007669"/>
    <property type="project" value="InterPro"/>
</dbReference>
<dbReference type="GO" id="GO:0006412">
    <property type="term" value="P:translation"/>
    <property type="evidence" value="ECO:0007669"/>
    <property type="project" value="UniProtKB-UniRule"/>
</dbReference>
<dbReference type="HAMAP" id="MF_00251">
    <property type="entry name" value="Ribosomal_bL36"/>
    <property type="match status" value="1"/>
</dbReference>
<dbReference type="InterPro" id="IPR000473">
    <property type="entry name" value="Ribosomal_bL36"/>
</dbReference>
<dbReference type="InterPro" id="IPR035977">
    <property type="entry name" value="Ribosomal_bL36_sp"/>
</dbReference>
<dbReference type="InterPro" id="IPR052010">
    <property type="entry name" value="Ribosomal_LSU_bL36"/>
</dbReference>
<dbReference type="NCBIfam" id="TIGR01022">
    <property type="entry name" value="rpmJ_bact"/>
    <property type="match status" value="1"/>
</dbReference>
<dbReference type="PANTHER" id="PTHR18804">
    <property type="entry name" value="RIBOSOMAL PROTEIN"/>
    <property type="match status" value="1"/>
</dbReference>
<dbReference type="PANTHER" id="PTHR18804:SF16">
    <property type="entry name" value="RIBOSOMAL PROTEIN"/>
    <property type="match status" value="1"/>
</dbReference>
<dbReference type="Pfam" id="PF00444">
    <property type="entry name" value="Ribosomal_L36"/>
    <property type="match status" value="1"/>
</dbReference>
<dbReference type="SUPFAM" id="SSF57840">
    <property type="entry name" value="Ribosomal protein L36"/>
    <property type="match status" value="1"/>
</dbReference>
<dbReference type="PROSITE" id="PS00828">
    <property type="entry name" value="RIBOSOMAL_L36"/>
    <property type="match status" value="1"/>
</dbReference>
<protein>
    <recommendedName>
        <fullName evidence="1">Large ribosomal subunit protein bL36</fullName>
    </recommendedName>
    <alternativeName>
        <fullName evidence="2">50S ribosomal protein L36</fullName>
    </alternativeName>
</protein>
<keyword id="KW-1185">Reference proteome</keyword>
<keyword id="KW-0687">Ribonucleoprotein</keyword>
<keyword id="KW-0689">Ribosomal protein</keyword>
<gene>
    <name evidence="1" type="primary">rpmJ</name>
    <name type="ordered locus">PA0563</name>
</gene>